<name>CHIA_ARAHY</name>
<organism>
    <name type="scientific">Arachis hypogaea</name>
    <name type="common">Peanut</name>
    <dbReference type="NCBI Taxonomy" id="3818"/>
    <lineage>
        <taxon>Eukaryota</taxon>
        <taxon>Viridiplantae</taxon>
        <taxon>Streptophyta</taxon>
        <taxon>Embryophyta</taxon>
        <taxon>Tracheophyta</taxon>
        <taxon>Spermatophyta</taxon>
        <taxon>Magnoliopsida</taxon>
        <taxon>eudicotyledons</taxon>
        <taxon>Gunneridae</taxon>
        <taxon>Pentapetalae</taxon>
        <taxon>rosids</taxon>
        <taxon>fabids</taxon>
        <taxon>Fabales</taxon>
        <taxon>Fabaceae</taxon>
        <taxon>Papilionoideae</taxon>
        <taxon>50 kb inversion clade</taxon>
        <taxon>dalbergioids sensu lato</taxon>
        <taxon>Dalbergieae</taxon>
        <taxon>Pterocarpus clade</taxon>
        <taxon>Arachis</taxon>
    </lineage>
</organism>
<reference key="1">
    <citation type="journal article" date="1990" name="Mol. Gen. Genet.">
        <title>Elicitor-specific induction of one member of the chitinase gene family in Arachis hypogaea.</title>
        <authorList>
            <person name="Herget T."/>
            <person name="Schell J."/>
            <person name="Schreier P.H."/>
        </authorList>
    </citation>
    <scope>NUCLEOTIDE SEQUENCE [MRNA]</scope>
</reference>
<feature type="chain" id="PRO_0000124819" description="Endochitinase 1A">
    <location>
        <begin position="1" status="less than"/>
        <end position="46" status="greater than"/>
    </location>
</feature>
<feature type="non-terminal residue">
    <location>
        <position position="1"/>
    </location>
</feature>
<feature type="non-terminal residue">
    <location>
        <position position="46"/>
    </location>
</feature>
<protein>
    <recommendedName>
        <fullName>Endochitinase 1A</fullName>
        <shortName>CHIT 1A</shortName>
        <ecNumber>3.2.1.14</ecNumber>
    </recommendedName>
</protein>
<evidence type="ECO:0000305" key="1"/>
<comment type="function">
    <text>Defense against chitin-containing fungal and bacterial pathogens.</text>
</comment>
<comment type="catalytic activity">
    <reaction>
        <text>Random endo-hydrolysis of N-acetyl-beta-D-glucosaminide (1-&gt;4)-beta-linkages in chitin and chitodextrins.</text>
        <dbReference type="EC" id="3.2.1.14"/>
    </reaction>
</comment>
<comment type="induction">
    <text>By yeast extract and dilution. Slight induction by glucan elicitor.</text>
</comment>
<comment type="similarity">
    <text evidence="1">Belongs to the glycosyl hydrolase 19 family. Chitinase class I subfamily.</text>
</comment>
<dbReference type="EC" id="3.2.1.14"/>
<dbReference type="EMBL" id="X56890">
    <property type="protein sequence ID" value="CAA40209.1"/>
    <property type="molecule type" value="mRNA"/>
</dbReference>
<dbReference type="SMR" id="Q06012"/>
<dbReference type="CAZy" id="GH19">
    <property type="family name" value="Glycoside Hydrolase Family 19"/>
</dbReference>
<dbReference type="GO" id="GO:0008061">
    <property type="term" value="F:chitin binding"/>
    <property type="evidence" value="ECO:0007669"/>
    <property type="project" value="UniProtKB-KW"/>
</dbReference>
<dbReference type="GO" id="GO:0008843">
    <property type="term" value="F:endochitinase activity"/>
    <property type="evidence" value="ECO:0007669"/>
    <property type="project" value="UniProtKB-EC"/>
</dbReference>
<dbReference type="GO" id="GO:0016998">
    <property type="term" value="P:cell wall macromolecule catabolic process"/>
    <property type="evidence" value="ECO:0007669"/>
    <property type="project" value="InterPro"/>
</dbReference>
<dbReference type="GO" id="GO:0006032">
    <property type="term" value="P:chitin catabolic process"/>
    <property type="evidence" value="ECO:0007669"/>
    <property type="project" value="UniProtKB-KW"/>
</dbReference>
<dbReference type="GO" id="GO:0006952">
    <property type="term" value="P:defense response"/>
    <property type="evidence" value="ECO:0007669"/>
    <property type="project" value="UniProtKB-KW"/>
</dbReference>
<dbReference type="GO" id="GO:0000272">
    <property type="term" value="P:polysaccharide catabolic process"/>
    <property type="evidence" value="ECO:0007669"/>
    <property type="project" value="UniProtKB-KW"/>
</dbReference>
<dbReference type="Gene3D" id="1.10.530.10">
    <property type="match status" value="1"/>
</dbReference>
<dbReference type="InterPro" id="IPR000726">
    <property type="entry name" value="Glyco_hydro_19_cat"/>
</dbReference>
<dbReference type="InterPro" id="IPR023346">
    <property type="entry name" value="Lysozyme-like_dom_sf"/>
</dbReference>
<dbReference type="Pfam" id="PF00182">
    <property type="entry name" value="Glyco_hydro_19"/>
    <property type="match status" value="1"/>
</dbReference>
<dbReference type="SUPFAM" id="SSF53955">
    <property type="entry name" value="Lysozyme-like"/>
    <property type="match status" value="1"/>
</dbReference>
<keyword id="KW-0119">Carbohydrate metabolism</keyword>
<keyword id="KW-0146">Chitin degradation</keyword>
<keyword id="KW-0147">Chitin-binding</keyword>
<keyword id="KW-0326">Glycosidase</keyword>
<keyword id="KW-0378">Hydrolase</keyword>
<keyword id="KW-0611">Plant defense</keyword>
<keyword id="KW-0624">Polysaccharide degradation</keyword>
<accession>Q06012</accession>
<proteinExistence type="evidence at transcript level"/>
<sequence length="46" mass="4700">MTAQGNKPSSHDVITGRWTPSAADRAAGRVSGFGVITNIINGGLDC</sequence>